<keyword id="KW-0067">ATP-binding</keyword>
<keyword id="KW-0520">NAD</keyword>
<keyword id="KW-0547">Nucleotide-binding</keyword>
<keyword id="KW-0548">Nucleotidyltransferase</keyword>
<keyword id="KW-0662">Pyridine nucleotide biosynthesis</keyword>
<keyword id="KW-0808">Transferase</keyword>
<reference key="1">
    <citation type="journal article" date="2004" name="Nat. Biotechnol.">
        <title>The genome sequence of the extreme thermophile Thermus thermophilus.</title>
        <authorList>
            <person name="Henne A."/>
            <person name="Brueggemann H."/>
            <person name="Raasch C."/>
            <person name="Wiezer A."/>
            <person name="Hartsch T."/>
            <person name="Liesegang H."/>
            <person name="Johann A."/>
            <person name="Lienard T."/>
            <person name="Gohl O."/>
            <person name="Martinez-Arias R."/>
            <person name="Jacobi C."/>
            <person name="Starkuviene V."/>
            <person name="Schlenczeck S."/>
            <person name="Dencker S."/>
            <person name="Huber R."/>
            <person name="Klenk H.-P."/>
            <person name="Kramer W."/>
            <person name="Merkl R."/>
            <person name="Gottschalk G."/>
            <person name="Fritz H.-J."/>
        </authorList>
    </citation>
    <scope>NUCLEOTIDE SEQUENCE [LARGE SCALE GENOMIC DNA]</scope>
    <source>
        <strain>ATCC BAA-163 / DSM 7039 / HB27</strain>
    </source>
</reference>
<feature type="chain" id="PRO_0000336745" description="Probable nicotinate-nucleotide adenylyltransferase">
    <location>
        <begin position="1"/>
        <end position="186"/>
    </location>
</feature>
<protein>
    <recommendedName>
        <fullName evidence="1">Probable nicotinate-nucleotide adenylyltransferase</fullName>
        <ecNumber evidence="1">2.7.7.18</ecNumber>
    </recommendedName>
    <alternativeName>
        <fullName evidence="1">Deamido-NAD(+) diphosphorylase</fullName>
    </alternativeName>
    <alternativeName>
        <fullName evidence="1">Deamido-NAD(+) pyrophosphorylase</fullName>
    </alternativeName>
    <alternativeName>
        <fullName evidence="1">Nicotinate mononucleotide adenylyltransferase</fullName>
        <shortName evidence="1">NaMN adenylyltransferase</shortName>
    </alternativeName>
</protein>
<gene>
    <name evidence="1" type="primary">nadD</name>
    <name type="ordered locus">TT_C1421</name>
</gene>
<organism>
    <name type="scientific">Thermus thermophilus (strain ATCC BAA-163 / DSM 7039 / HB27)</name>
    <dbReference type="NCBI Taxonomy" id="262724"/>
    <lineage>
        <taxon>Bacteria</taxon>
        <taxon>Thermotogati</taxon>
        <taxon>Deinococcota</taxon>
        <taxon>Deinococci</taxon>
        <taxon>Thermales</taxon>
        <taxon>Thermaceae</taxon>
        <taxon>Thermus</taxon>
    </lineage>
</organism>
<accession>Q72HR5</accession>
<dbReference type="EC" id="2.7.7.18" evidence="1"/>
<dbReference type="EMBL" id="AE017221">
    <property type="protein sequence ID" value="AAS81763.1"/>
    <property type="molecule type" value="Genomic_DNA"/>
</dbReference>
<dbReference type="RefSeq" id="WP_011173801.1">
    <property type="nucleotide sequence ID" value="NC_005835.1"/>
</dbReference>
<dbReference type="SMR" id="Q72HR5"/>
<dbReference type="KEGG" id="tth:TT_C1421"/>
<dbReference type="eggNOG" id="COG1057">
    <property type="taxonomic scope" value="Bacteria"/>
</dbReference>
<dbReference type="HOGENOM" id="CLU_069765_1_1_0"/>
<dbReference type="OrthoDB" id="5295945at2"/>
<dbReference type="UniPathway" id="UPA00253">
    <property type="reaction ID" value="UER00332"/>
</dbReference>
<dbReference type="Proteomes" id="UP000000592">
    <property type="component" value="Chromosome"/>
</dbReference>
<dbReference type="GO" id="GO:0005524">
    <property type="term" value="F:ATP binding"/>
    <property type="evidence" value="ECO:0007669"/>
    <property type="project" value="UniProtKB-KW"/>
</dbReference>
<dbReference type="GO" id="GO:0004515">
    <property type="term" value="F:nicotinate-nucleotide adenylyltransferase activity"/>
    <property type="evidence" value="ECO:0007669"/>
    <property type="project" value="UniProtKB-UniRule"/>
</dbReference>
<dbReference type="GO" id="GO:0009435">
    <property type="term" value="P:NAD biosynthetic process"/>
    <property type="evidence" value="ECO:0007669"/>
    <property type="project" value="UniProtKB-UniRule"/>
</dbReference>
<dbReference type="CDD" id="cd02165">
    <property type="entry name" value="NMNAT"/>
    <property type="match status" value="1"/>
</dbReference>
<dbReference type="Gene3D" id="3.40.50.620">
    <property type="entry name" value="HUPs"/>
    <property type="match status" value="1"/>
</dbReference>
<dbReference type="HAMAP" id="MF_00244">
    <property type="entry name" value="NaMN_adenylyltr"/>
    <property type="match status" value="1"/>
</dbReference>
<dbReference type="InterPro" id="IPR004821">
    <property type="entry name" value="Cyt_trans-like"/>
</dbReference>
<dbReference type="InterPro" id="IPR005248">
    <property type="entry name" value="NadD/NMNAT"/>
</dbReference>
<dbReference type="InterPro" id="IPR014729">
    <property type="entry name" value="Rossmann-like_a/b/a_fold"/>
</dbReference>
<dbReference type="NCBIfam" id="TIGR00125">
    <property type="entry name" value="cyt_tran_rel"/>
    <property type="match status" value="1"/>
</dbReference>
<dbReference type="NCBIfam" id="TIGR00482">
    <property type="entry name" value="nicotinate (nicotinamide) nucleotide adenylyltransferase"/>
    <property type="match status" value="1"/>
</dbReference>
<dbReference type="NCBIfam" id="NF000840">
    <property type="entry name" value="PRK00071.1-3"/>
    <property type="match status" value="1"/>
</dbReference>
<dbReference type="PANTHER" id="PTHR39321">
    <property type="entry name" value="NICOTINATE-NUCLEOTIDE ADENYLYLTRANSFERASE-RELATED"/>
    <property type="match status" value="1"/>
</dbReference>
<dbReference type="PANTHER" id="PTHR39321:SF3">
    <property type="entry name" value="PHOSPHOPANTETHEINE ADENYLYLTRANSFERASE"/>
    <property type="match status" value="1"/>
</dbReference>
<dbReference type="Pfam" id="PF01467">
    <property type="entry name" value="CTP_transf_like"/>
    <property type="match status" value="1"/>
</dbReference>
<dbReference type="SUPFAM" id="SSF52374">
    <property type="entry name" value="Nucleotidylyl transferase"/>
    <property type="match status" value="1"/>
</dbReference>
<proteinExistence type="inferred from homology"/>
<sequence length="186" mass="21050">MRIGLFGGSFDPIHLGHLLAASQAQEVLCLDRVLFVVAARPPHKVPVAPAEARYEMTLLAVAEDPRFTVSRLELDRPGPSYTVDTLRKARRLFPQDELFFITGADAYRDVLTWKEGERLPEYATLVAVARPGYPLEEAPLPVVPLFVPEVGISSTEIRRRLKEGRSVRYWVPRAVEVYIEKHGLYR</sequence>
<evidence type="ECO:0000255" key="1">
    <source>
        <dbReference type="HAMAP-Rule" id="MF_00244"/>
    </source>
</evidence>
<name>NADD_THET2</name>
<comment type="function">
    <text evidence="1">Catalyzes the reversible adenylation of nicotinate mononucleotide (NaMN) to nicotinic acid adenine dinucleotide (NaAD).</text>
</comment>
<comment type="catalytic activity">
    <reaction evidence="1">
        <text>nicotinate beta-D-ribonucleotide + ATP + H(+) = deamido-NAD(+) + diphosphate</text>
        <dbReference type="Rhea" id="RHEA:22860"/>
        <dbReference type="ChEBI" id="CHEBI:15378"/>
        <dbReference type="ChEBI" id="CHEBI:30616"/>
        <dbReference type="ChEBI" id="CHEBI:33019"/>
        <dbReference type="ChEBI" id="CHEBI:57502"/>
        <dbReference type="ChEBI" id="CHEBI:58437"/>
        <dbReference type="EC" id="2.7.7.18"/>
    </reaction>
</comment>
<comment type="pathway">
    <text evidence="1">Cofactor biosynthesis; NAD(+) biosynthesis; deamido-NAD(+) from nicotinate D-ribonucleotide: step 1/1.</text>
</comment>
<comment type="similarity">
    <text evidence="1">Belongs to the NadD family.</text>
</comment>